<organism>
    <name type="scientific">Acidithiobacillus caldus (strain ATCC 51756 / DSM 8584 / KU)</name>
    <dbReference type="NCBI Taxonomy" id="637389"/>
    <lineage>
        <taxon>Bacteria</taxon>
        <taxon>Pseudomonadati</taxon>
        <taxon>Pseudomonadota</taxon>
        <taxon>Acidithiobacillia</taxon>
        <taxon>Acidithiobacillales</taxon>
        <taxon>Acidithiobacillaceae</taxon>
        <taxon>Acidithiobacillus</taxon>
    </lineage>
</organism>
<accession>A0A059ZV61</accession>
<gene>
    <name type="ORF">Acaty_c1477</name>
</gene>
<evidence type="ECO:0000250" key="1">
    <source>
        <dbReference type="UniProtKB" id="P49040"/>
    </source>
</evidence>
<evidence type="ECO:0000250" key="2">
    <source>
        <dbReference type="UniProtKB" id="Q820M5"/>
    </source>
</evidence>
<evidence type="ECO:0000269" key="3">
    <source>
    </source>
</evidence>
<evidence type="ECO:0000303" key="4">
    <source>
    </source>
</evidence>
<evidence type="ECO:0000305" key="5"/>
<evidence type="ECO:0000305" key="6">
    <source>
    </source>
</evidence>
<protein>
    <recommendedName>
        <fullName>Sucrose synthase</fullName>
        <shortName evidence="4">SuSyAc</shortName>
        <ecNumber evidence="3">2.4.1.13</ecNumber>
    </recommendedName>
</protein>
<name>SUS_ACICK</name>
<keyword id="KW-0328">Glycosyltransferase</keyword>
<keyword id="KW-0808">Transferase</keyword>
<proteinExistence type="evidence at protein level"/>
<comment type="function">
    <text evidence="3">Catalyzes the reversible conversion of sucrose and a nucleotide disphosphate (NDP) into fructose and NDP-glucose; although the reaction is freely reversible in vitro, the physiological reaction seems to be sucrose cleavage. Unlike characterized plant enzymes prefers ADP as a cosubstrate, whereas plants prefer UDP. The KM for sucrose is 45-fold lower in the presence of ADP than UDP. Its preference for ADP over UDP suggests it may directly link sucrose and glycogen metabolism (Probable).</text>
</comment>
<comment type="catalytic activity">
    <reaction evidence="3">
        <text>an NDP-alpha-D-glucose + D-fructose = a ribonucleoside 5'-diphosphate + sucrose + H(+)</text>
        <dbReference type="Rhea" id="RHEA:16241"/>
        <dbReference type="ChEBI" id="CHEBI:15378"/>
        <dbReference type="ChEBI" id="CHEBI:17992"/>
        <dbReference type="ChEBI" id="CHEBI:37721"/>
        <dbReference type="ChEBI" id="CHEBI:57930"/>
        <dbReference type="ChEBI" id="CHEBI:76533"/>
        <dbReference type="EC" id="2.4.1.13"/>
    </reaction>
</comment>
<comment type="catalytic activity">
    <reaction evidence="3">
        <text>ADP-alpha-D-glucose + D-fructose = sucrose + ADP + H(+)</text>
        <dbReference type="Rhea" id="RHEA:55080"/>
        <dbReference type="ChEBI" id="CHEBI:15378"/>
        <dbReference type="ChEBI" id="CHEBI:17992"/>
        <dbReference type="ChEBI" id="CHEBI:37721"/>
        <dbReference type="ChEBI" id="CHEBI:57498"/>
        <dbReference type="ChEBI" id="CHEBI:456216"/>
        <dbReference type="EC" id="2.4.1.13"/>
    </reaction>
</comment>
<comment type="biophysicochemical properties">
    <kinetics>
        <KM evidence="3">0.17 mM for ADP in sucrose breakdown</KM>
        <KM evidence="3">16.9 mM for CDP in sucrose breakdown</KM>
        <KM evidence="3">8.5 mM for GDP in sucrose breakdown</KM>
        <KM evidence="3">7.8 mM for UDP in sucrose breakdown</KM>
    </kinetics>
    <phDependence>
        <text evidence="3">Optimum pH is 5.5.</text>
    </phDependence>
    <temperatureDependence>
        <text evidence="3">Optimum temperature is 60 degrees Celsius. Remains stable after 15 minutes at 60 degrees Celsius.</text>
    </temperatureDependence>
</comment>
<comment type="subunit">
    <text evidence="2">Homotetramer.</text>
</comment>
<comment type="biotechnology">
    <text evidence="6">Could be used to synthesize NDP-sugars for large-scale glycosylation processes; its comparatively high thermostability would be useful.</text>
</comment>
<comment type="similarity">
    <text evidence="5">Belongs to the glycosyltransferase 1 family.</text>
</comment>
<sequence>MIEALRQQLLDDPRSWYAFLRHLVASQRDSWLYTDLQRACADFREQLPEGYAEGIGPLEDFVAHTQEVIFRDPWMVFAWRPRPGRWIYVRIHREQLALEELSTDAYLQAKEGIVGLGAEGEAVLTVDFRDFRPVSRRLRDESTIGDGLTHLNRRLAGRIFSDLAAGRSQILEFLSLHRLDGQNLMLSNGNTDFDSLRQTVQYLGTLPRETPWAEIREDMRRRGFAPGWGNTAGRVRETMRLLMDLLDSPSPAALESFLDRIPMISRILIVSIHGWFAQDKVLGRPDTGGQVVYILDQARALEREMRNRLRQQGVDVEPRILIATRLIPESDGTTCDQRLEPVVGAENVQILRVPFRYPDGRIHPHWISRFKIWPWLERYAQDLEREVLAELGSRPDLIIGNYSDGNLVATLLSERLGVTQCNIAHALEKSKYLYSDLHWRDHEQDHHFACQFTADLIAMNAADIIVTSTYQEIAGNDREIGQYEGHQDYTLPGLYRVENGIDVFDSKFNIVSPGADPRFYFSYARTEERPSFLEPEIESLLFGREPGADRRGVLEDRQKPLLLSMARMDRIKNLSGLAELYGRSSRLRGLANLVIIGGHVDVGNSRDAEEREEIRRMHEIMDHYQLDGQLRWVGALLDKTVAGELYRVVADGRGVFVQPALFEAFGLTVIEAMSSGLPVFATRFGGPLEIIEDGVSGFHIDPNDHEATAERLADFLEAARERPKYWLEISDAALARVAERYTWERYAERLMTIARIFGFWRFVLDRESQVMERYLQMFRHLQWRPLAHAVPME</sequence>
<feature type="chain" id="PRO_0000442255" description="Sucrose synthase">
    <location>
        <begin position="1"/>
        <end position="793"/>
    </location>
</feature>
<feature type="region of interest" description="GT-B glycosyltransferase" evidence="1">
    <location>
        <begin position="263"/>
        <end position="742"/>
    </location>
</feature>
<reference key="1">
    <citation type="journal article" date="2009" name="J. Bacteriol.">
        <title>Draft genome sequence of the extremely acidophilic bacterium Acidithiobacillus caldus ATCC 51756 reveals metabolic versatility in the genus Acidithiobacillus.</title>
        <authorList>
            <person name="Valdes J."/>
            <person name="Quatrini R."/>
            <person name="Hallberg K."/>
            <person name="Dopson M."/>
            <person name="Valenzuela P.D."/>
            <person name="Holmes D.S."/>
        </authorList>
    </citation>
    <scope>NUCLEOTIDE SEQUENCE [LARGE SCALE GENOMIC DNA]</scope>
    <source>
        <strain>ATCC 51756 / DSM 8584 / KU</strain>
    </source>
</reference>
<reference key="2">
    <citation type="journal article" date="2015" name="Appl. Microbiol. Biotechnol.">
        <title>Identification of sucrose synthase in nonphotosynthetic bacteria and characterization of the recombinant enzymes.</title>
        <authorList>
            <person name="Diricks M."/>
            <person name="De Bruyn F."/>
            <person name="Van Daele P."/>
            <person name="Walmagh M."/>
            <person name="Desmet T."/>
        </authorList>
    </citation>
    <scope>FUNCTION</scope>
    <scope>CATALYTIC ACTIVITY</scope>
    <scope>BIOPHYSICOCHEMICAL PROPERTIES</scope>
    <scope>BIOTECHNOLOGY</scope>
    <source>
        <strain>ATCC 51756 / DSM 8584 / KU</strain>
    </source>
</reference>
<dbReference type="EC" id="2.4.1.13" evidence="3"/>
<dbReference type="EMBL" id="CP005986">
    <property type="protein sequence ID" value="AIA55343.1"/>
    <property type="molecule type" value="Genomic_DNA"/>
</dbReference>
<dbReference type="RefSeq" id="WP_004872341.1">
    <property type="nucleotide sequence ID" value="NZ_JAAOMK010000021.1"/>
</dbReference>
<dbReference type="SMR" id="A0A059ZV61"/>
<dbReference type="KEGG" id="acz:Acaty_c1477"/>
<dbReference type="eggNOG" id="COG0438">
    <property type="taxonomic scope" value="Bacteria"/>
</dbReference>
<dbReference type="HOGENOM" id="CLU_019158_1_0_6"/>
<dbReference type="BRENDA" id="2.4.1.13">
    <property type="organism ID" value="13376"/>
</dbReference>
<dbReference type="Proteomes" id="UP000005522">
    <property type="component" value="Chromosome"/>
</dbReference>
<dbReference type="GO" id="GO:0016157">
    <property type="term" value="F:sucrose synthase activity"/>
    <property type="evidence" value="ECO:0007669"/>
    <property type="project" value="UniProtKB-EC"/>
</dbReference>
<dbReference type="GO" id="GO:0005985">
    <property type="term" value="P:sucrose metabolic process"/>
    <property type="evidence" value="ECO:0007669"/>
    <property type="project" value="InterPro"/>
</dbReference>
<dbReference type="Gene3D" id="1.20.120.1230">
    <property type="match status" value="1"/>
</dbReference>
<dbReference type="Gene3D" id="3.10.450.330">
    <property type="match status" value="1"/>
</dbReference>
<dbReference type="Gene3D" id="3.40.50.2000">
    <property type="entry name" value="Glycogen Phosphorylase B"/>
    <property type="match status" value="2"/>
</dbReference>
<dbReference type="InterPro" id="IPR001296">
    <property type="entry name" value="Glyco_trans_1"/>
</dbReference>
<dbReference type="InterPro" id="IPR000368">
    <property type="entry name" value="Sucrose_synth_GT-B1"/>
</dbReference>
<dbReference type="InterPro" id="IPR012820">
    <property type="entry name" value="Sucrose_synthase_pln/cyn"/>
</dbReference>
<dbReference type="InterPro" id="IPR056736">
    <property type="entry name" value="SUS_EPBD"/>
</dbReference>
<dbReference type="InterPro" id="IPR056735">
    <property type="entry name" value="SUS_N"/>
</dbReference>
<dbReference type="NCBIfam" id="TIGR02470">
    <property type="entry name" value="sucr_synth"/>
    <property type="match status" value="1"/>
</dbReference>
<dbReference type="PANTHER" id="PTHR45839">
    <property type="match status" value="1"/>
</dbReference>
<dbReference type="PANTHER" id="PTHR45839:SF7">
    <property type="entry name" value="SUCROSE SYNTHASE 1"/>
    <property type="match status" value="1"/>
</dbReference>
<dbReference type="Pfam" id="PF00534">
    <property type="entry name" value="Glycos_transf_1"/>
    <property type="match status" value="1"/>
</dbReference>
<dbReference type="Pfam" id="PF00862">
    <property type="entry name" value="GT-B_Sucrose_synth"/>
    <property type="match status" value="1"/>
</dbReference>
<dbReference type="Pfam" id="PF24862">
    <property type="entry name" value="SUS_EPBD"/>
    <property type="match status" value="1"/>
</dbReference>
<dbReference type="Pfam" id="PF24861">
    <property type="entry name" value="SUS_N"/>
    <property type="match status" value="1"/>
</dbReference>
<dbReference type="SUPFAM" id="SSF53756">
    <property type="entry name" value="UDP-Glycosyltransferase/glycogen phosphorylase"/>
    <property type="match status" value="1"/>
</dbReference>